<dbReference type="EMBL" id="AC013427">
    <property type="protein sequence ID" value="AAF98572.1"/>
    <property type="molecule type" value="Genomic_DNA"/>
</dbReference>
<dbReference type="EMBL" id="CP002684">
    <property type="protein sequence ID" value="AEE30694.1"/>
    <property type="molecule type" value="Genomic_DNA"/>
</dbReference>
<dbReference type="EMBL" id="AY081336">
    <property type="protein sequence ID" value="AAL91225.1"/>
    <property type="molecule type" value="mRNA"/>
</dbReference>
<dbReference type="EMBL" id="AY128828">
    <property type="protein sequence ID" value="AAM91228.1"/>
    <property type="molecule type" value="mRNA"/>
</dbReference>
<dbReference type="EMBL" id="AY084844">
    <property type="protein sequence ID" value="AAM61409.1"/>
    <property type="molecule type" value="mRNA"/>
</dbReference>
<dbReference type="PIR" id="D86391">
    <property type="entry name" value="D86391"/>
</dbReference>
<dbReference type="RefSeq" id="NP_564247.1">
    <property type="nucleotide sequence ID" value="NM_102409.3"/>
</dbReference>
<dbReference type="SMR" id="Q9FZD1"/>
<dbReference type="BioGRID" id="24423">
    <property type="interactions" value="4"/>
</dbReference>
<dbReference type="FunCoup" id="Q9FZD1">
    <property type="interactions" value="1898"/>
</dbReference>
<dbReference type="IntAct" id="Q9FZD1">
    <property type="interactions" value="3"/>
</dbReference>
<dbReference type="STRING" id="3702.Q9FZD1"/>
<dbReference type="MetOSite" id="Q9FZD1"/>
<dbReference type="PaxDb" id="3702-AT1G26460.1"/>
<dbReference type="ProteomicsDB" id="226196"/>
<dbReference type="EnsemblPlants" id="AT1G26460.1">
    <property type="protein sequence ID" value="AT1G26460.1"/>
    <property type="gene ID" value="AT1G26460"/>
</dbReference>
<dbReference type="GeneID" id="839187"/>
<dbReference type="Gramene" id="AT1G26460.1">
    <property type="protein sequence ID" value="AT1G26460.1"/>
    <property type="gene ID" value="AT1G26460"/>
</dbReference>
<dbReference type="KEGG" id="ath:AT1G26460"/>
<dbReference type="Araport" id="AT1G26460"/>
<dbReference type="TAIR" id="AT1G26460"/>
<dbReference type="eggNOG" id="KOG4197">
    <property type="taxonomic scope" value="Eukaryota"/>
</dbReference>
<dbReference type="HOGENOM" id="CLU_002706_49_22_1"/>
<dbReference type="InParanoid" id="Q9FZD1"/>
<dbReference type="OMA" id="MYQARET"/>
<dbReference type="PhylomeDB" id="Q9FZD1"/>
<dbReference type="PRO" id="PR:Q9FZD1"/>
<dbReference type="Proteomes" id="UP000006548">
    <property type="component" value="Chromosome 1"/>
</dbReference>
<dbReference type="ExpressionAtlas" id="Q9FZD1">
    <property type="expression patterns" value="baseline and differential"/>
</dbReference>
<dbReference type="GO" id="GO:0005739">
    <property type="term" value="C:mitochondrion"/>
    <property type="evidence" value="ECO:0007005"/>
    <property type="project" value="TAIR"/>
</dbReference>
<dbReference type="GO" id="GO:0003729">
    <property type="term" value="F:mRNA binding"/>
    <property type="evidence" value="ECO:0000314"/>
    <property type="project" value="TAIR"/>
</dbReference>
<dbReference type="Gene3D" id="1.25.40.10">
    <property type="entry name" value="Tetratricopeptide repeat domain"/>
    <property type="match status" value="2"/>
</dbReference>
<dbReference type="InterPro" id="IPR044605">
    <property type="entry name" value="At1g26460-like"/>
</dbReference>
<dbReference type="InterPro" id="IPR002885">
    <property type="entry name" value="Pentatricopeptide_rpt"/>
</dbReference>
<dbReference type="InterPro" id="IPR011990">
    <property type="entry name" value="TPR-like_helical_dom_sf"/>
</dbReference>
<dbReference type="NCBIfam" id="TIGR00756">
    <property type="entry name" value="PPR"/>
    <property type="match status" value="1"/>
</dbReference>
<dbReference type="PANTHER" id="PTHR47205">
    <property type="entry name" value="OS07G0599000 PROTEIN"/>
    <property type="match status" value="1"/>
</dbReference>
<dbReference type="PANTHER" id="PTHR47205:SF1">
    <property type="entry name" value="OS07G0599000 PROTEIN"/>
    <property type="match status" value="1"/>
</dbReference>
<dbReference type="Pfam" id="PF13041">
    <property type="entry name" value="PPR_2"/>
    <property type="match status" value="1"/>
</dbReference>
<dbReference type="Pfam" id="PF13812">
    <property type="entry name" value="PPR_3"/>
    <property type="match status" value="1"/>
</dbReference>
<dbReference type="PROSITE" id="PS51375">
    <property type="entry name" value="PPR"/>
    <property type="match status" value="7"/>
</dbReference>
<feature type="transit peptide" description="Mitochondrion" evidence="1">
    <location>
        <begin position="1"/>
        <end position="115"/>
    </location>
</feature>
<feature type="chain" id="PRO_0000342799" description="Pentatricopeptide repeat-containing protein At1g26460, mitochondrial">
    <location>
        <begin position="116"/>
        <end position="630"/>
    </location>
</feature>
<feature type="repeat" description="PPR 1">
    <location>
        <begin position="154"/>
        <end position="189"/>
    </location>
</feature>
<feature type="repeat" description="PPR 2">
    <location>
        <begin position="190"/>
        <end position="224"/>
    </location>
</feature>
<feature type="repeat" description="PPR 3">
    <location>
        <begin position="227"/>
        <end position="261"/>
    </location>
</feature>
<feature type="repeat" description="PPR 4">
    <location>
        <begin position="468"/>
        <end position="503"/>
    </location>
</feature>
<feature type="repeat" description="PPR 5">
    <location>
        <begin position="504"/>
        <end position="538"/>
    </location>
</feature>
<feature type="repeat" description="PPR 6">
    <location>
        <begin position="539"/>
        <end position="573"/>
    </location>
</feature>
<feature type="region of interest" description="Disordered" evidence="2">
    <location>
        <begin position="42"/>
        <end position="79"/>
    </location>
</feature>
<feature type="compositionally biased region" description="Polar residues" evidence="2">
    <location>
        <begin position="67"/>
        <end position="77"/>
    </location>
</feature>
<feature type="sequence conflict" description="In Ref. 4; AAM61409." evidence="4" ref="4">
    <original>A</original>
    <variation>T</variation>
    <location>
        <position position="30"/>
    </location>
</feature>
<feature type="sequence conflict" description="In Ref. 4; AAM61409." evidence="4" ref="4">
    <original>N</original>
    <variation>K</variation>
    <location>
        <position position="385"/>
    </location>
</feature>
<comment type="subcellular location">
    <subcellularLocation>
        <location evidence="3">Mitochondrion</location>
    </subcellularLocation>
</comment>
<comment type="similarity">
    <text evidence="4">Belongs to the PPR family. P subfamily.</text>
</comment>
<comment type="online information" name="Pentatricopeptide repeat proteins">
    <link uri="https://ppr.plantenergy.uwa.edu.au"/>
</comment>
<name>PPR58_ARATH</name>
<gene>
    <name type="ordered locus">At1g26460</name>
    <name type="ORF">T1K7.17</name>
</gene>
<protein>
    <recommendedName>
        <fullName>Pentatricopeptide repeat-containing protein At1g26460, mitochondrial</fullName>
    </recommendedName>
</protein>
<reference key="1">
    <citation type="journal article" date="2000" name="Nature">
        <title>Sequence and analysis of chromosome 1 of the plant Arabidopsis thaliana.</title>
        <authorList>
            <person name="Theologis A."/>
            <person name="Ecker J.R."/>
            <person name="Palm C.J."/>
            <person name="Federspiel N.A."/>
            <person name="Kaul S."/>
            <person name="White O."/>
            <person name="Alonso J."/>
            <person name="Altafi H."/>
            <person name="Araujo R."/>
            <person name="Bowman C.L."/>
            <person name="Brooks S.Y."/>
            <person name="Buehler E."/>
            <person name="Chan A."/>
            <person name="Chao Q."/>
            <person name="Chen H."/>
            <person name="Cheuk R.F."/>
            <person name="Chin C.W."/>
            <person name="Chung M.K."/>
            <person name="Conn L."/>
            <person name="Conway A.B."/>
            <person name="Conway A.R."/>
            <person name="Creasy T.H."/>
            <person name="Dewar K."/>
            <person name="Dunn P."/>
            <person name="Etgu P."/>
            <person name="Feldblyum T.V."/>
            <person name="Feng J.-D."/>
            <person name="Fong B."/>
            <person name="Fujii C.Y."/>
            <person name="Gill J.E."/>
            <person name="Goldsmith A.D."/>
            <person name="Haas B."/>
            <person name="Hansen N.F."/>
            <person name="Hughes B."/>
            <person name="Huizar L."/>
            <person name="Hunter J.L."/>
            <person name="Jenkins J."/>
            <person name="Johnson-Hopson C."/>
            <person name="Khan S."/>
            <person name="Khaykin E."/>
            <person name="Kim C.J."/>
            <person name="Koo H.L."/>
            <person name="Kremenetskaia I."/>
            <person name="Kurtz D.B."/>
            <person name="Kwan A."/>
            <person name="Lam B."/>
            <person name="Langin-Hooper S."/>
            <person name="Lee A."/>
            <person name="Lee J.M."/>
            <person name="Lenz C.A."/>
            <person name="Li J.H."/>
            <person name="Li Y.-P."/>
            <person name="Lin X."/>
            <person name="Liu S.X."/>
            <person name="Liu Z.A."/>
            <person name="Luros J.S."/>
            <person name="Maiti R."/>
            <person name="Marziali A."/>
            <person name="Militscher J."/>
            <person name="Miranda M."/>
            <person name="Nguyen M."/>
            <person name="Nierman W.C."/>
            <person name="Osborne B.I."/>
            <person name="Pai G."/>
            <person name="Peterson J."/>
            <person name="Pham P.K."/>
            <person name="Rizzo M."/>
            <person name="Rooney T."/>
            <person name="Rowley D."/>
            <person name="Sakano H."/>
            <person name="Salzberg S.L."/>
            <person name="Schwartz J.R."/>
            <person name="Shinn P."/>
            <person name="Southwick A.M."/>
            <person name="Sun H."/>
            <person name="Tallon L.J."/>
            <person name="Tambunga G."/>
            <person name="Toriumi M.J."/>
            <person name="Town C.D."/>
            <person name="Utterback T."/>
            <person name="Van Aken S."/>
            <person name="Vaysberg M."/>
            <person name="Vysotskaia V.S."/>
            <person name="Walker M."/>
            <person name="Wu D."/>
            <person name="Yu G."/>
            <person name="Fraser C.M."/>
            <person name="Venter J.C."/>
            <person name="Davis R.W."/>
        </authorList>
    </citation>
    <scope>NUCLEOTIDE SEQUENCE [LARGE SCALE GENOMIC DNA]</scope>
    <source>
        <strain>cv. Columbia</strain>
    </source>
</reference>
<reference key="2">
    <citation type="journal article" date="2017" name="Plant J.">
        <title>Araport11: a complete reannotation of the Arabidopsis thaliana reference genome.</title>
        <authorList>
            <person name="Cheng C.Y."/>
            <person name="Krishnakumar V."/>
            <person name="Chan A.P."/>
            <person name="Thibaud-Nissen F."/>
            <person name="Schobel S."/>
            <person name="Town C.D."/>
        </authorList>
    </citation>
    <scope>GENOME REANNOTATION</scope>
    <source>
        <strain>cv. Columbia</strain>
    </source>
</reference>
<reference key="3">
    <citation type="journal article" date="2003" name="Science">
        <title>Empirical analysis of transcriptional activity in the Arabidopsis genome.</title>
        <authorList>
            <person name="Yamada K."/>
            <person name="Lim J."/>
            <person name="Dale J.M."/>
            <person name="Chen H."/>
            <person name="Shinn P."/>
            <person name="Palm C.J."/>
            <person name="Southwick A.M."/>
            <person name="Wu H.C."/>
            <person name="Kim C.J."/>
            <person name="Nguyen M."/>
            <person name="Pham P.K."/>
            <person name="Cheuk R.F."/>
            <person name="Karlin-Newmann G."/>
            <person name="Liu S.X."/>
            <person name="Lam B."/>
            <person name="Sakano H."/>
            <person name="Wu T."/>
            <person name="Yu G."/>
            <person name="Miranda M."/>
            <person name="Quach H.L."/>
            <person name="Tripp M."/>
            <person name="Chang C.H."/>
            <person name="Lee J.M."/>
            <person name="Toriumi M.J."/>
            <person name="Chan M.M."/>
            <person name="Tang C.C."/>
            <person name="Onodera C.S."/>
            <person name="Deng J.M."/>
            <person name="Akiyama K."/>
            <person name="Ansari Y."/>
            <person name="Arakawa T."/>
            <person name="Banh J."/>
            <person name="Banno F."/>
            <person name="Bowser L."/>
            <person name="Brooks S.Y."/>
            <person name="Carninci P."/>
            <person name="Chao Q."/>
            <person name="Choy N."/>
            <person name="Enju A."/>
            <person name="Goldsmith A.D."/>
            <person name="Gurjal M."/>
            <person name="Hansen N.F."/>
            <person name="Hayashizaki Y."/>
            <person name="Johnson-Hopson C."/>
            <person name="Hsuan V.W."/>
            <person name="Iida K."/>
            <person name="Karnes M."/>
            <person name="Khan S."/>
            <person name="Koesema E."/>
            <person name="Ishida J."/>
            <person name="Jiang P.X."/>
            <person name="Jones T."/>
            <person name="Kawai J."/>
            <person name="Kamiya A."/>
            <person name="Meyers C."/>
            <person name="Nakajima M."/>
            <person name="Narusaka M."/>
            <person name="Seki M."/>
            <person name="Sakurai T."/>
            <person name="Satou M."/>
            <person name="Tamse R."/>
            <person name="Vaysberg M."/>
            <person name="Wallender E.K."/>
            <person name="Wong C."/>
            <person name="Yamamura Y."/>
            <person name="Yuan S."/>
            <person name="Shinozaki K."/>
            <person name="Davis R.W."/>
            <person name="Theologis A."/>
            <person name="Ecker J.R."/>
        </authorList>
    </citation>
    <scope>NUCLEOTIDE SEQUENCE [LARGE SCALE MRNA]</scope>
    <source>
        <strain>cv. Columbia</strain>
    </source>
</reference>
<reference key="4">
    <citation type="submission" date="2002-03" db="EMBL/GenBank/DDBJ databases">
        <title>Full-length cDNA from Arabidopsis thaliana.</title>
        <authorList>
            <person name="Brover V.V."/>
            <person name="Troukhan M.E."/>
            <person name="Alexandrov N.A."/>
            <person name="Lu Y.-P."/>
            <person name="Flavell R.B."/>
            <person name="Feldmann K.A."/>
        </authorList>
    </citation>
    <scope>NUCLEOTIDE SEQUENCE [LARGE SCALE MRNA]</scope>
</reference>
<reference key="5">
    <citation type="journal article" date="2004" name="Plant Cell">
        <title>Experimental analysis of the Arabidopsis mitochondrial proteome highlights signaling and regulatory components, provides assessment of targeting prediction programs, and indicates plant-specific mitochondrial proteins.</title>
        <authorList>
            <person name="Heazlewood J.L."/>
            <person name="Tonti-Filippini J.S."/>
            <person name="Gout A.M."/>
            <person name="Day D.A."/>
            <person name="Whelan J."/>
            <person name="Millar A.H."/>
        </authorList>
    </citation>
    <scope>IDENTIFICATION BY MASS SPECTROMETRY</scope>
    <scope>SUBCELLULAR LOCATION [LARGE SCALE ANALYSIS]</scope>
    <source>
        <strain>cv. Landsberg erecta</strain>
    </source>
</reference>
<reference key="6">
    <citation type="journal article" date="2004" name="Plant Cell">
        <title>Genome-wide analysis of Arabidopsis pentatricopeptide repeat proteins reveals their essential role in organelle biogenesis.</title>
        <authorList>
            <person name="Lurin C."/>
            <person name="Andres C."/>
            <person name="Aubourg S."/>
            <person name="Bellaoui M."/>
            <person name="Bitton F."/>
            <person name="Bruyere C."/>
            <person name="Caboche M."/>
            <person name="Debast C."/>
            <person name="Gualberto J."/>
            <person name="Hoffmann B."/>
            <person name="Lecharny A."/>
            <person name="Le Ret M."/>
            <person name="Martin-Magniette M.-L."/>
            <person name="Mireau H."/>
            <person name="Peeters N."/>
            <person name="Renou J.-P."/>
            <person name="Szurek B."/>
            <person name="Taconnat L."/>
            <person name="Small I."/>
        </authorList>
    </citation>
    <scope>GENE FAMILY</scope>
</reference>
<accession>Q9FZD1</accession>
<accession>Q8LFH2</accession>
<evidence type="ECO:0000255" key="1"/>
<evidence type="ECO:0000256" key="2">
    <source>
        <dbReference type="SAM" id="MobiDB-lite"/>
    </source>
</evidence>
<evidence type="ECO:0000269" key="3">
    <source>
    </source>
</evidence>
<evidence type="ECO:0000305" key="4"/>
<sequence>MASHLFTRSRISLLKTLKPNPFTSASPIRAISGTPFLSQDPLLATESTDHDPSNHQSTSTPLPPNPATGSPLYQENWRSPIPNTPSFNQSLVPLGFLNQAPAPRIRALSETLDMNSLLNMFADWTASQRWSDMKQLFEVWVRSLDKNGKPNKPDVNLYNHYLRANLMMGASAGDMLDLVAPMEEFSVEPNTASYNLVLKAMYQARETEAAMKLLERMLLLGKDSLPDDESYDLVIGMHFGVGKNDEAMKVMDTALKSGYMLSTSVFTECVRSCVAKGRTDTLVSIIERCKAVDRNKSLCPSWILCNYIAEVAIQEDNSKLAFYAFEFMFKWITRGEMARPSVIFSVDEGLVVAGLASAARTCSSSLVEGSWTILKQSLRGRKAANPASYIAKINAYASLGNLQKAFTSLHELESAYADSEKEVVEEMLSPFTSLYPLVVACSKKGFETLDEVYFQLESLSQGDTPYKSVAALNCIILGCANTWDLDRAYQTFEAISASFGLTPNIDSYNALLYAFGKVKKTFEATNVFEHLVSIGVKPDSRTYSLLVDAHLINRDPKSALTVVDDMIKAGFEPSRETLKKLRRRCVREMDDENDDQVEALAKKFQIRMGSENRRNMLFNIDYSRGRALNN</sequence>
<keyword id="KW-0496">Mitochondrion</keyword>
<keyword id="KW-1185">Reference proteome</keyword>
<keyword id="KW-0677">Repeat</keyword>
<keyword id="KW-0809">Transit peptide</keyword>
<proteinExistence type="evidence at protein level"/>
<organism>
    <name type="scientific">Arabidopsis thaliana</name>
    <name type="common">Mouse-ear cress</name>
    <dbReference type="NCBI Taxonomy" id="3702"/>
    <lineage>
        <taxon>Eukaryota</taxon>
        <taxon>Viridiplantae</taxon>
        <taxon>Streptophyta</taxon>
        <taxon>Embryophyta</taxon>
        <taxon>Tracheophyta</taxon>
        <taxon>Spermatophyta</taxon>
        <taxon>Magnoliopsida</taxon>
        <taxon>eudicotyledons</taxon>
        <taxon>Gunneridae</taxon>
        <taxon>Pentapetalae</taxon>
        <taxon>rosids</taxon>
        <taxon>malvids</taxon>
        <taxon>Brassicales</taxon>
        <taxon>Brassicaceae</taxon>
        <taxon>Camelineae</taxon>
        <taxon>Arabidopsis</taxon>
    </lineage>
</organism>